<feature type="chain" id="PRO_1000205918" description="Small ribosomal subunit protein uS12">
    <location>
        <begin position="1"/>
        <end position="124"/>
    </location>
</feature>
<feature type="modified residue" description="3-methylthioaspartic acid" evidence="1">
    <location>
        <position position="89"/>
    </location>
</feature>
<keyword id="KW-0488">Methylation</keyword>
<keyword id="KW-0687">Ribonucleoprotein</keyword>
<keyword id="KW-0689">Ribosomal protein</keyword>
<keyword id="KW-0694">RNA-binding</keyword>
<keyword id="KW-0699">rRNA-binding</keyword>
<keyword id="KW-0820">tRNA-binding</keyword>
<accession>C4K4G1</accession>
<sequence>MPTITQLIRKQRVKKSVKSKAPALAASPQKRGVCKRVYTTTPRKPNSAMRKVCTVVFTNGYECICYIGGEGHNVQEHGVLLVKGGGVKDLPGVKYHIVRGALDCSGVKDRKQARSKYGAARPKA</sequence>
<name>RS12_HAMD5</name>
<organism>
    <name type="scientific">Hamiltonella defensa subsp. Acyrthosiphon pisum (strain 5AT)</name>
    <dbReference type="NCBI Taxonomy" id="572265"/>
    <lineage>
        <taxon>Bacteria</taxon>
        <taxon>Pseudomonadati</taxon>
        <taxon>Pseudomonadota</taxon>
        <taxon>Gammaproteobacteria</taxon>
        <taxon>Enterobacterales</taxon>
        <taxon>Enterobacteriaceae</taxon>
        <taxon>aphid secondary symbionts</taxon>
        <taxon>Candidatus Hamiltonella</taxon>
    </lineage>
</organism>
<reference key="1">
    <citation type="journal article" date="2009" name="Proc. Natl. Acad. Sci. U.S.A.">
        <title>Hamiltonella defensa, genome evolution of protective bacterial endosymbiont from pathogenic ancestors.</title>
        <authorList>
            <person name="Degnan P.H."/>
            <person name="Yu Y."/>
            <person name="Sisneros N."/>
            <person name="Wing R.A."/>
            <person name="Moran N.A."/>
        </authorList>
    </citation>
    <scope>NUCLEOTIDE SEQUENCE [LARGE SCALE GENOMIC DNA]</scope>
    <source>
        <strain>5AT</strain>
    </source>
</reference>
<protein>
    <recommendedName>
        <fullName evidence="2">Small ribosomal subunit protein uS12</fullName>
    </recommendedName>
    <alternativeName>
        <fullName evidence="3">30S ribosomal protein S12</fullName>
    </alternativeName>
</protein>
<evidence type="ECO:0000250" key="1"/>
<evidence type="ECO:0000255" key="2">
    <source>
        <dbReference type="HAMAP-Rule" id="MF_00403"/>
    </source>
</evidence>
<evidence type="ECO:0000305" key="3"/>
<dbReference type="EMBL" id="CP001277">
    <property type="protein sequence ID" value="ACQ67454.1"/>
    <property type="molecule type" value="Genomic_DNA"/>
</dbReference>
<dbReference type="RefSeq" id="WP_015873275.1">
    <property type="nucleotide sequence ID" value="NC_012751.1"/>
</dbReference>
<dbReference type="SMR" id="C4K4G1"/>
<dbReference type="STRING" id="572265.HDEF_0721"/>
<dbReference type="GeneID" id="66260574"/>
<dbReference type="KEGG" id="hde:HDEF_0721"/>
<dbReference type="eggNOG" id="COG0048">
    <property type="taxonomic scope" value="Bacteria"/>
</dbReference>
<dbReference type="HOGENOM" id="CLU_104295_1_2_6"/>
<dbReference type="Proteomes" id="UP000002334">
    <property type="component" value="Chromosome"/>
</dbReference>
<dbReference type="GO" id="GO:0015935">
    <property type="term" value="C:small ribosomal subunit"/>
    <property type="evidence" value="ECO:0007669"/>
    <property type="project" value="InterPro"/>
</dbReference>
<dbReference type="GO" id="GO:0019843">
    <property type="term" value="F:rRNA binding"/>
    <property type="evidence" value="ECO:0007669"/>
    <property type="project" value="UniProtKB-UniRule"/>
</dbReference>
<dbReference type="GO" id="GO:0003735">
    <property type="term" value="F:structural constituent of ribosome"/>
    <property type="evidence" value="ECO:0007669"/>
    <property type="project" value="InterPro"/>
</dbReference>
<dbReference type="GO" id="GO:0000049">
    <property type="term" value="F:tRNA binding"/>
    <property type="evidence" value="ECO:0007669"/>
    <property type="project" value="UniProtKB-UniRule"/>
</dbReference>
<dbReference type="GO" id="GO:0006412">
    <property type="term" value="P:translation"/>
    <property type="evidence" value="ECO:0007669"/>
    <property type="project" value="UniProtKB-UniRule"/>
</dbReference>
<dbReference type="CDD" id="cd03368">
    <property type="entry name" value="Ribosomal_S12"/>
    <property type="match status" value="1"/>
</dbReference>
<dbReference type="FunFam" id="2.40.50.140:FF:000099">
    <property type="entry name" value="Ribosomal protein S12, mitochondrial"/>
    <property type="match status" value="1"/>
</dbReference>
<dbReference type="Gene3D" id="2.40.50.140">
    <property type="entry name" value="Nucleic acid-binding proteins"/>
    <property type="match status" value="1"/>
</dbReference>
<dbReference type="HAMAP" id="MF_00403_B">
    <property type="entry name" value="Ribosomal_uS12_B"/>
    <property type="match status" value="1"/>
</dbReference>
<dbReference type="InterPro" id="IPR012340">
    <property type="entry name" value="NA-bd_OB-fold"/>
</dbReference>
<dbReference type="InterPro" id="IPR006032">
    <property type="entry name" value="Ribosomal_uS12"/>
</dbReference>
<dbReference type="InterPro" id="IPR005679">
    <property type="entry name" value="Ribosomal_uS12_bac"/>
</dbReference>
<dbReference type="NCBIfam" id="TIGR00981">
    <property type="entry name" value="rpsL_bact"/>
    <property type="match status" value="1"/>
</dbReference>
<dbReference type="PANTHER" id="PTHR11652">
    <property type="entry name" value="30S RIBOSOMAL PROTEIN S12 FAMILY MEMBER"/>
    <property type="match status" value="1"/>
</dbReference>
<dbReference type="Pfam" id="PF00164">
    <property type="entry name" value="Ribosom_S12_S23"/>
    <property type="match status" value="1"/>
</dbReference>
<dbReference type="PIRSF" id="PIRSF002133">
    <property type="entry name" value="Ribosomal_S12/S23"/>
    <property type="match status" value="1"/>
</dbReference>
<dbReference type="PRINTS" id="PR01034">
    <property type="entry name" value="RIBOSOMALS12"/>
</dbReference>
<dbReference type="SUPFAM" id="SSF50249">
    <property type="entry name" value="Nucleic acid-binding proteins"/>
    <property type="match status" value="1"/>
</dbReference>
<dbReference type="PROSITE" id="PS00055">
    <property type="entry name" value="RIBOSOMAL_S12"/>
    <property type="match status" value="1"/>
</dbReference>
<comment type="function">
    <text evidence="2">With S4 and S5 plays an important role in translational accuracy.</text>
</comment>
<comment type="function">
    <text evidence="2">Interacts with and stabilizes bases of the 16S rRNA that are involved in tRNA selection in the A site and with the mRNA backbone. Located at the interface of the 30S and 50S subunits, it traverses the body of the 30S subunit contacting proteins on the other side and probably holding the rRNA structure together. The combined cluster of proteins S8, S12 and S17 appears to hold together the shoulder and platform of the 30S subunit.</text>
</comment>
<comment type="subunit">
    <text evidence="2">Part of the 30S ribosomal subunit. Contacts proteins S8 and S17. May interact with IF1 in the 30S initiation complex.</text>
</comment>
<comment type="similarity">
    <text evidence="2">Belongs to the universal ribosomal protein uS12 family.</text>
</comment>
<proteinExistence type="inferred from homology"/>
<gene>
    <name evidence="2" type="primary">rpsL</name>
    <name type="ordered locus">HDEF_0721</name>
</gene>